<name>SYGB_YERPE</name>
<dbReference type="EC" id="6.1.1.14" evidence="1"/>
<dbReference type="EMBL" id="AL590842">
    <property type="protein sequence ID" value="CAL22643.1"/>
    <property type="molecule type" value="Genomic_DNA"/>
</dbReference>
<dbReference type="EMBL" id="AE009952">
    <property type="protein sequence ID" value="AAM87632.1"/>
    <property type="molecule type" value="Genomic_DNA"/>
</dbReference>
<dbReference type="EMBL" id="AE017042">
    <property type="protein sequence ID" value="AAS64121.1"/>
    <property type="molecule type" value="Genomic_DNA"/>
</dbReference>
<dbReference type="PIR" id="AH0494">
    <property type="entry name" value="AH0494"/>
</dbReference>
<dbReference type="RefSeq" id="WP_002209623.1">
    <property type="nucleotide sequence ID" value="NZ_WUCM01000035.1"/>
</dbReference>
<dbReference type="RefSeq" id="YP_002348927.1">
    <property type="nucleotide sequence ID" value="NC_003143.1"/>
</dbReference>
<dbReference type="SMR" id="Q8Z9W7"/>
<dbReference type="STRING" id="214092.YPO4071"/>
<dbReference type="PaxDb" id="214092-YPO4071"/>
<dbReference type="DNASU" id="1149036"/>
<dbReference type="EnsemblBacteria" id="AAS64121">
    <property type="protein sequence ID" value="AAS64121"/>
    <property type="gene ID" value="YP_3981"/>
</dbReference>
<dbReference type="GeneID" id="57974645"/>
<dbReference type="KEGG" id="ype:YPO4071"/>
<dbReference type="KEGG" id="ypk:y4089"/>
<dbReference type="KEGG" id="ypm:YP_3981"/>
<dbReference type="PATRIC" id="fig|214092.21.peg.4613"/>
<dbReference type="eggNOG" id="COG0751">
    <property type="taxonomic scope" value="Bacteria"/>
</dbReference>
<dbReference type="HOGENOM" id="CLU_007220_2_2_6"/>
<dbReference type="OMA" id="LPIPKRM"/>
<dbReference type="OrthoDB" id="9775440at2"/>
<dbReference type="Proteomes" id="UP000000815">
    <property type="component" value="Chromosome"/>
</dbReference>
<dbReference type="Proteomes" id="UP000001019">
    <property type="component" value="Chromosome"/>
</dbReference>
<dbReference type="Proteomes" id="UP000002490">
    <property type="component" value="Chromosome"/>
</dbReference>
<dbReference type="GO" id="GO:0005829">
    <property type="term" value="C:cytosol"/>
    <property type="evidence" value="ECO:0000318"/>
    <property type="project" value="GO_Central"/>
</dbReference>
<dbReference type="GO" id="GO:0004814">
    <property type="term" value="F:arginine-tRNA ligase activity"/>
    <property type="evidence" value="ECO:0007669"/>
    <property type="project" value="InterPro"/>
</dbReference>
<dbReference type="GO" id="GO:0005524">
    <property type="term" value="F:ATP binding"/>
    <property type="evidence" value="ECO:0007669"/>
    <property type="project" value="UniProtKB-UniRule"/>
</dbReference>
<dbReference type="GO" id="GO:0004820">
    <property type="term" value="F:glycine-tRNA ligase activity"/>
    <property type="evidence" value="ECO:0007669"/>
    <property type="project" value="UniProtKB-UniRule"/>
</dbReference>
<dbReference type="GO" id="GO:0006420">
    <property type="term" value="P:arginyl-tRNA aminoacylation"/>
    <property type="evidence" value="ECO:0007669"/>
    <property type="project" value="InterPro"/>
</dbReference>
<dbReference type="GO" id="GO:0006426">
    <property type="term" value="P:glycyl-tRNA aminoacylation"/>
    <property type="evidence" value="ECO:0007669"/>
    <property type="project" value="UniProtKB-UniRule"/>
</dbReference>
<dbReference type="HAMAP" id="MF_00255">
    <property type="entry name" value="Gly_tRNA_synth_beta"/>
    <property type="match status" value="1"/>
</dbReference>
<dbReference type="InterPro" id="IPR008909">
    <property type="entry name" value="DALR_anticod-bd"/>
</dbReference>
<dbReference type="InterPro" id="IPR015944">
    <property type="entry name" value="Gly-tRNA-synth_bsu"/>
</dbReference>
<dbReference type="InterPro" id="IPR006194">
    <property type="entry name" value="Gly-tRNA-synth_heterodimer"/>
</dbReference>
<dbReference type="NCBIfam" id="TIGR00211">
    <property type="entry name" value="glyS"/>
    <property type="match status" value="1"/>
</dbReference>
<dbReference type="PANTHER" id="PTHR30075:SF2">
    <property type="entry name" value="GLYCINE--TRNA LIGASE, CHLOROPLASTIC_MITOCHONDRIAL 2"/>
    <property type="match status" value="1"/>
</dbReference>
<dbReference type="PANTHER" id="PTHR30075">
    <property type="entry name" value="GLYCYL-TRNA SYNTHETASE"/>
    <property type="match status" value="1"/>
</dbReference>
<dbReference type="Pfam" id="PF05746">
    <property type="entry name" value="DALR_1"/>
    <property type="match status" value="1"/>
</dbReference>
<dbReference type="Pfam" id="PF02092">
    <property type="entry name" value="tRNA_synt_2f"/>
    <property type="match status" value="1"/>
</dbReference>
<dbReference type="PRINTS" id="PR01045">
    <property type="entry name" value="TRNASYNTHGB"/>
</dbReference>
<dbReference type="SUPFAM" id="SSF109604">
    <property type="entry name" value="HD-domain/PDEase-like"/>
    <property type="match status" value="1"/>
</dbReference>
<dbReference type="PROSITE" id="PS50861">
    <property type="entry name" value="AA_TRNA_LIGASE_II_GLYAB"/>
    <property type="match status" value="1"/>
</dbReference>
<sequence length="689" mass="76204">MTQQTFLVEIGTEELPPKALRSLAESFAANFTAELDNANLSHGEVSWYAAPRRLAVKVANLSAAQADREVEKRGPAIAQAFDAEGKPSKAAEGWARGCGITVDQAERLVTDKGEWLLYRAHVKGQPAQLLLAGMVNTALSKLPIPKLMRWGDKETQFVRPVHTVTLLLGTEVIPGTVLGINSDRVIRGHRFMGEAEFTIDSADQYPQILLERGKVIADYELRKSIIKRDAEQAAQQIGGVADLSESLLEEVASLVEWPVVLTAKFEEKFLAVPAEALVYTMKGDQKYFPVYDTAGHLMPHFIFVANIESKDPQQIISGNEKVVRPRLADAEFFFKTDRKKRLEDNLPRLETVLFQQQLGTLRDKTDRIQALAGWVAAQIGADVNHATRAGLLSKCDLMTNMVFEFTDTQGVMGMHYARHDGEAEDVAVALNEQYQPRFAGDDLPSNPVACALAIADKMDTLAGIFGIGQHPKGDKDPFALRRAALGVLRIIVEKNLSLDLQTLTEEAVRLYGSKLTNAKVVDDVIEFMLGRFRAWYQDEGHSVDTIQAVLARRPTKPADFDARVKAVTYFRTLDAAAALAAANKRVSNILAKSTDTLNDHVHASILKEPAELKLATHLVVLRDQLEPVFAAGQYKEALVELAALRETVDEFFESVMVMAEDDAVRVNRLTLLSKLRELFLQVADISLLQ</sequence>
<evidence type="ECO:0000255" key="1">
    <source>
        <dbReference type="HAMAP-Rule" id="MF_00255"/>
    </source>
</evidence>
<protein>
    <recommendedName>
        <fullName evidence="1">Glycine--tRNA ligase beta subunit</fullName>
        <ecNumber evidence="1">6.1.1.14</ecNumber>
    </recommendedName>
    <alternativeName>
        <fullName evidence="1">Glycyl-tRNA synthetase beta subunit</fullName>
        <shortName evidence="1">GlyRS</shortName>
    </alternativeName>
</protein>
<gene>
    <name evidence="1" type="primary">glyS</name>
    <name type="ordered locus">YPO4071</name>
    <name type="ordered locus">y4089</name>
    <name type="ordered locus">YP_3981</name>
</gene>
<reference key="1">
    <citation type="journal article" date="2001" name="Nature">
        <title>Genome sequence of Yersinia pestis, the causative agent of plague.</title>
        <authorList>
            <person name="Parkhill J."/>
            <person name="Wren B.W."/>
            <person name="Thomson N.R."/>
            <person name="Titball R.W."/>
            <person name="Holden M.T.G."/>
            <person name="Prentice M.B."/>
            <person name="Sebaihia M."/>
            <person name="James K.D."/>
            <person name="Churcher C.M."/>
            <person name="Mungall K.L."/>
            <person name="Baker S."/>
            <person name="Basham D."/>
            <person name="Bentley S.D."/>
            <person name="Brooks K."/>
            <person name="Cerdeno-Tarraga A.-M."/>
            <person name="Chillingworth T."/>
            <person name="Cronin A."/>
            <person name="Davies R.M."/>
            <person name="Davis P."/>
            <person name="Dougan G."/>
            <person name="Feltwell T."/>
            <person name="Hamlin N."/>
            <person name="Holroyd S."/>
            <person name="Jagels K."/>
            <person name="Karlyshev A.V."/>
            <person name="Leather S."/>
            <person name="Moule S."/>
            <person name="Oyston P.C.F."/>
            <person name="Quail M.A."/>
            <person name="Rutherford K.M."/>
            <person name="Simmonds M."/>
            <person name="Skelton J."/>
            <person name="Stevens K."/>
            <person name="Whitehead S."/>
            <person name="Barrell B.G."/>
        </authorList>
    </citation>
    <scope>NUCLEOTIDE SEQUENCE [LARGE SCALE GENOMIC DNA]</scope>
    <source>
        <strain>CO-92 / Biovar Orientalis</strain>
    </source>
</reference>
<reference key="2">
    <citation type="journal article" date="2002" name="J. Bacteriol.">
        <title>Genome sequence of Yersinia pestis KIM.</title>
        <authorList>
            <person name="Deng W."/>
            <person name="Burland V."/>
            <person name="Plunkett G. III"/>
            <person name="Boutin A."/>
            <person name="Mayhew G.F."/>
            <person name="Liss P."/>
            <person name="Perna N.T."/>
            <person name="Rose D.J."/>
            <person name="Mau B."/>
            <person name="Zhou S."/>
            <person name="Schwartz D.C."/>
            <person name="Fetherston J.D."/>
            <person name="Lindler L.E."/>
            <person name="Brubaker R.R."/>
            <person name="Plano G.V."/>
            <person name="Straley S.C."/>
            <person name="McDonough K.A."/>
            <person name="Nilles M.L."/>
            <person name="Matson J.S."/>
            <person name="Blattner F.R."/>
            <person name="Perry R.D."/>
        </authorList>
    </citation>
    <scope>NUCLEOTIDE SEQUENCE [LARGE SCALE GENOMIC DNA]</scope>
    <source>
        <strain>KIM10+ / Biovar Mediaevalis</strain>
    </source>
</reference>
<reference key="3">
    <citation type="journal article" date="2004" name="DNA Res.">
        <title>Complete genome sequence of Yersinia pestis strain 91001, an isolate avirulent to humans.</title>
        <authorList>
            <person name="Song Y."/>
            <person name="Tong Z."/>
            <person name="Wang J."/>
            <person name="Wang L."/>
            <person name="Guo Z."/>
            <person name="Han Y."/>
            <person name="Zhang J."/>
            <person name="Pei D."/>
            <person name="Zhou D."/>
            <person name="Qin H."/>
            <person name="Pang X."/>
            <person name="Han Y."/>
            <person name="Zhai J."/>
            <person name="Li M."/>
            <person name="Cui B."/>
            <person name="Qi Z."/>
            <person name="Jin L."/>
            <person name="Dai R."/>
            <person name="Chen F."/>
            <person name="Li S."/>
            <person name="Ye C."/>
            <person name="Du Z."/>
            <person name="Lin W."/>
            <person name="Wang J."/>
            <person name="Yu J."/>
            <person name="Yang H."/>
            <person name="Wang J."/>
            <person name="Huang P."/>
            <person name="Yang R."/>
        </authorList>
    </citation>
    <scope>NUCLEOTIDE SEQUENCE [LARGE SCALE GENOMIC DNA]</scope>
    <source>
        <strain>91001 / Biovar Mediaevalis</strain>
    </source>
</reference>
<comment type="catalytic activity">
    <reaction evidence="1">
        <text>tRNA(Gly) + glycine + ATP = glycyl-tRNA(Gly) + AMP + diphosphate</text>
        <dbReference type="Rhea" id="RHEA:16013"/>
        <dbReference type="Rhea" id="RHEA-COMP:9664"/>
        <dbReference type="Rhea" id="RHEA-COMP:9683"/>
        <dbReference type="ChEBI" id="CHEBI:30616"/>
        <dbReference type="ChEBI" id="CHEBI:33019"/>
        <dbReference type="ChEBI" id="CHEBI:57305"/>
        <dbReference type="ChEBI" id="CHEBI:78442"/>
        <dbReference type="ChEBI" id="CHEBI:78522"/>
        <dbReference type="ChEBI" id="CHEBI:456215"/>
        <dbReference type="EC" id="6.1.1.14"/>
    </reaction>
</comment>
<comment type="subunit">
    <text evidence="1">Tetramer of two alpha and two beta subunits.</text>
</comment>
<comment type="subcellular location">
    <subcellularLocation>
        <location evidence="1">Cytoplasm</location>
    </subcellularLocation>
</comment>
<comment type="similarity">
    <text evidence="1">Belongs to the class-II aminoacyl-tRNA synthetase family.</text>
</comment>
<feature type="chain" id="PRO_0000072942" description="Glycine--tRNA ligase beta subunit">
    <location>
        <begin position="1"/>
        <end position="689"/>
    </location>
</feature>
<keyword id="KW-0030">Aminoacyl-tRNA synthetase</keyword>
<keyword id="KW-0067">ATP-binding</keyword>
<keyword id="KW-0963">Cytoplasm</keyword>
<keyword id="KW-0436">Ligase</keyword>
<keyword id="KW-0547">Nucleotide-binding</keyword>
<keyword id="KW-0648">Protein biosynthesis</keyword>
<keyword id="KW-1185">Reference proteome</keyword>
<accession>Q8Z9W7</accession>
<accession>Q0W9W1</accession>
<proteinExistence type="inferred from homology"/>
<organism>
    <name type="scientific">Yersinia pestis</name>
    <dbReference type="NCBI Taxonomy" id="632"/>
    <lineage>
        <taxon>Bacteria</taxon>
        <taxon>Pseudomonadati</taxon>
        <taxon>Pseudomonadota</taxon>
        <taxon>Gammaproteobacteria</taxon>
        <taxon>Enterobacterales</taxon>
        <taxon>Yersiniaceae</taxon>
        <taxon>Yersinia</taxon>
    </lineage>
</organism>